<name>PBAN_HELZE</name>
<proteinExistence type="evidence at protein level"/>
<feature type="signal peptide" evidence="2">
    <location>
        <begin position="1"/>
        <end position="23"/>
    </location>
</feature>
<feature type="peptide" id="PRO_0000029936" description="Diapause hormone homolog" evidence="2">
    <location>
        <begin position="24"/>
        <end position="47"/>
    </location>
</feature>
<feature type="propeptide" id="PRO_0000029937">
    <location>
        <begin position="51"/>
        <end position="94"/>
    </location>
</feature>
<feature type="peptide" id="PRO_0000029938" description="Alpha-SG neuropeptide" evidence="2">
    <location>
        <begin position="97"/>
        <end position="103"/>
    </location>
</feature>
<feature type="peptide" id="PRO_0000029939" description="Beta-SG neuropeptide" evidence="2">
    <location>
        <begin position="106"/>
        <end position="123"/>
    </location>
</feature>
<feature type="peptide" id="PRO_0000029940" description="Pheromone biosynthesis-activating neuropeptide">
    <location>
        <begin position="127"/>
        <end position="159"/>
    </location>
</feature>
<feature type="peptide" id="PRO_0000029941" description="Gamma-SG neuropeptide" evidence="2">
    <location>
        <begin position="162"/>
        <end position="169"/>
    </location>
</feature>
<feature type="propeptide" id="PRO_0000029942">
    <location>
        <begin position="172"/>
        <end position="194"/>
    </location>
</feature>
<feature type="modified residue" description="Leucine amide" evidence="7">
    <location>
        <position position="47"/>
    </location>
</feature>
<feature type="modified residue" description="Leucine amide" evidence="7">
    <location>
        <position position="103"/>
    </location>
</feature>
<feature type="modified residue" description="Leucine amide" evidence="7">
    <location>
        <position position="123"/>
    </location>
</feature>
<feature type="modified residue" description="Leucine amide" evidence="5 7">
    <location>
        <position position="159"/>
    </location>
</feature>
<feature type="modified residue" description="Leucine amide" evidence="7">
    <location>
        <position position="169"/>
    </location>
</feature>
<keyword id="KW-0027">Amidation</keyword>
<keyword id="KW-0165">Cleavage on pair of basic residues</keyword>
<keyword id="KW-0903">Direct protein sequencing</keyword>
<keyword id="KW-0372">Hormone</keyword>
<keyword id="KW-0527">Neuropeptide</keyword>
<keyword id="KW-0589">Pheromone response</keyword>
<keyword id="KW-0964">Secreted</keyword>
<keyword id="KW-0732">Signal</keyword>
<protein>
    <recommendedName>
        <fullName>PBAN-type neuropeptides</fullName>
    </recommendedName>
    <alternativeName>
        <fullName>Pheromone/pyrokinin biosynthesis-activating neuropeptide</fullName>
    </alternativeName>
    <component>
        <recommendedName>
            <fullName>Diapause hormone homolog</fullName>
            <shortName>DH</shortName>
        </recommendedName>
        <alternativeName>
            <fullName>Pyrokinin-1</fullName>
        </alternativeName>
    </component>
    <component>
        <recommendedName>
            <fullName>Alpha-SG neuropeptide</fullName>
        </recommendedName>
    </component>
    <component>
        <recommendedName>
            <fullName>Beta-SG neuropeptide</fullName>
        </recommendedName>
        <alternativeName>
            <fullName>Pyrokinin-2</fullName>
        </alternativeName>
    </component>
    <component>
        <recommendedName>
            <fullName>Pheromone biosynthesis-activating neuropeptide</fullName>
            <shortName>Hez-PBAN</shortName>
        </recommendedName>
        <alternativeName>
            <fullName>Pyrokinin-3</fullName>
        </alternativeName>
    </component>
    <component>
        <recommendedName>
            <fullName>Gamma-SG neuropeptide</fullName>
        </recommendedName>
        <alternativeName>
            <fullName>Pyrokinin-4</fullName>
        </alternativeName>
    </component>
</protein>
<evidence type="ECO:0000250" key="1"/>
<evidence type="ECO:0000255" key="2"/>
<evidence type="ECO:0000269" key="3">
    <source>
    </source>
</evidence>
<evidence type="ECO:0000269" key="4">
    <source>
    </source>
</evidence>
<evidence type="ECO:0000269" key="5">
    <source>
    </source>
</evidence>
<evidence type="ECO:0000305" key="6"/>
<evidence type="ECO:0000305" key="7">
    <source>
    </source>
</evidence>
<sequence>MFNQTQLFVFLAVFTTSSVLGNNNDVKDGAASGAHSDRLGLWFGPRLGKRSLRISTEDNRQAFFKLLEAADALKYYYDQLPYEMQADEPETRVTKKVIFTPKLGRSLAYDDKSFENVEFTPRLGRRLSDDMPATPADQEMYRQDPEQIDSRTKYFSPRLGRTMNFSPRLGRELSYDMMPNKIRVVRSTNKTRST</sequence>
<accession>P11159</accession>
<accession>Q25200</accession>
<organism>
    <name type="scientific">Helicoverpa zea</name>
    <name type="common">Corn earworm moth</name>
    <name type="synonym">Heliothis zea</name>
    <dbReference type="NCBI Taxonomy" id="7113"/>
    <lineage>
        <taxon>Eukaryota</taxon>
        <taxon>Metazoa</taxon>
        <taxon>Ecdysozoa</taxon>
        <taxon>Arthropoda</taxon>
        <taxon>Hexapoda</taxon>
        <taxon>Insecta</taxon>
        <taxon>Pterygota</taxon>
        <taxon>Neoptera</taxon>
        <taxon>Endopterygota</taxon>
        <taxon>Lepidoptera</taxon>
        <taxon>Glossata</taxon>
        <taxon>Ditrysia</taxon>
        <taxon>Noctuoidea</taxon>
        <taxon>Noctuidae</taxon>
        <taxon>Heliothinae</taxon>
        <taxon>Helicoverpa</taxon>
    </lineage>
</organism>
<comment type="function">
    <text evidence="3 4">A hormone that controls sex pheromone production in females and pheromone responsiveness in male. Also mediates visceral muscle contractile activity (myotropic activity).</text>
</comment>
<comment type="subcellular location">
    <subcellularLocation>
        <location evidence="4">Secreted</location>
    </subcellularLocation>
</comment>
<comment type="tissue specificity">
    <text evidence="4">Expressed in the subesophageal ganglions. Not found in corpora cardiaca, corpora allata and thoracic ganglia.</text>
</comment>
<comment type="miscellaneous">
    <text evidence="1">Juvenile hormone seems to allow PBAN release, which then induces pheromone biosynthesis.</text>
</comment>
<comment type="similarity">
    <text evidence="6">Belongs to the pyrokinin family.</text>
</comment>
<reference key="1">
    <citation type="journal article" date="1994" name="Proc. Natl. Acad. Sci. U.S.A.">
        <title>Structural organization of the Helicoverpa zea gene encoding the precursor protein for pheromone biosynthesis-activating neuropeptide and other neuropeptides.</title>
        <authorList>
            <person name="Ma P.W."/>
            <person name="Knipple D.C."/>
            <person name="Roelofs W.L."/>
        </authorList>
    </citation>
    <scope>NUCLEOTIDE SEQUENCE [MRNA]</scope>
    <scope>FUNCTION</scope>
    <scope>SUBCELLULAR LOCATION</scope>
    <scope>TISSUE SPECIFICITY</scope>
    <scope>AMIDATION AT LEU-47; LEU-103; LEU-123; LEU-159 AND LEU-169</scope>
    <source>
        <tissue>Head</tissue>
    </source>
</reference>
<reference key="2">
    <citation type="journal article" date="1989" name="Science">
        <title>Identification of a neuropeptide hormone that regulates sex pheromone production in female moths.</title>
        <authorList>
            <person name="Raina A.K."/>
            <person name="Jaffe H."/>
            <person name="Kempe T.G."/>
            <person name="Keim P."/>
            <person name="Blacher R.W."/>
            <person name="Fales H.M."/>
            <person name="Riley C.T."/>
            <person name="Klun J.A."/>
            <person name="Ridgway R.L."/>
            <person name="Hayes D.K."/>
        </authorList>
    </citation>
    <scope>PROTEIN SEQUENCE OF 127-159</scope>
    <scope>FUNCTION</scope>
    <scope>SYNTHESIS</scope>
    <source>
        <tissue>Brain</tissue>
        <tissue>Subesophageal ganglion</tissue>
    </source>
</reference>
<reference key="3">
    <citation type="journal article" date="1996" name="Int. J. Pept. Protein Res.">
        <title>Evidence for a C-terminal turn in PBAN. An NMR and distance geometry study.</title>
        <authorList>
            <person name="Clark B.A."/>
            <person name="Prestwich G.D."/>
        </authorList>
    </citation>
    <scope>STRUCTURE BY NMR OF 127-159</scope>
    <scope>AMIDATION AT LEU-159</scope>
</reference>
<dbReference type="EMBL" id="U08109">
    <property type="protein sequence ID" value="AAA20661.1"/>
    <property type="molecule type" value="mRNA"/>
</dbReference>
<dbReference type="PIR" id="A55756">
    <property type="entry name" value="A55756"/>
</dbReference>
<dbReference type="RefSeq" id="XP_047039942.1">
    <property type="nucleotide sequence ID" value="XM_047183986.1"/>
</dbReference>
<dbReference type="EnsemblMetazoa" id="XM_047183986.1">
    <property type="protein sequence ID" value="XP_047039942.1"/>
    <property type="gene ID" value="LOC124644545"/>
</dbReference>
<dbReference type="GeneID" id="124644545"/>
<dbReference type="GO" id="GO:0005576">
    <property type="term" value="C:extracellular region"/>
    <property type="evidence" value="ECO:0007669"/>
    <property type="project" value="UniProtKB-SubCell"/>
</dbReference>
<dbReference type="GO" id="GO:0005184">
    <property type="term" value="F:neuropeptide hormone activity"/>
    <property type="evidence" value="ECO:0007669"/>
    <property type="project" value="InterPro"/>
</dbReference>
<dbReference type="GO" id="GO:0007218">
    <property type="term" value="P:neuropeptide signaling pathway"/>
    <property type="evidence" value="ECO:0007669"/>
    <property type="project" value="UniProtKB-KW"/>
</dbReference>
<dbReference type="GO" id="GO:0042811">
    <property type="term" value="P:pheromone biosynthetic process"/>
    <property type="evidence" value="ECO:0007669"/>
    <property type="project" value="InterPro"/>
</dbReference>
<dbReference type="GO" id="GO:0019236">
    <property type="term" value="P:response to pheromone"/>
    <property type="evidence" value="ECO:0007669"/>
    <property type="project" value="UniProtKB-KW"/>
</dbReference>
<dbReference type="InterPro" id="IPR008730">
    <property type="entry name" value="PBAN"/>
</dbReference>
<dbReference type="InterPro" id="IPR001484">
    <property type="entry name" value="Pyrokinin_CS"/>
</dbReference>
<dbReference type="Pfam" id="PF05874">
    <property type="entry name" value="PBAN"/>
    <property type="match status" value="1"/>
</dbReference>
<dbReference type="PROSITE" id="PS00539">
    <property type="entry name" value="PYROKININ"/>
    <property type="match status" value="4"/>
</dbReference>